<keyword id="KW-0027">Amidation</keyword>
<keyword id="KW-0903">Direct protein sequencing</keyword>
<keyword id="KW-0527">Neuropeptide</keyword>
<keyword id="KW-0964">Secreted</keyword>
<reference evidence="3" key="1">
    <citation type="journal article" date="2009" name="Peptides">
        <title>Neuropeptides in Heteroptera: identification of allatotropin-related peptide and tachykinin-related peptides using MALDI-TOF mass spectrometry.</title>
        <authorList>
            <person name="Neupert S."/>
            <person name="Russell W.K."/>
            <person name="Russell D.H."/>
            <person name="Lopez J.D. Jr."/>
            <person name="Predel R."/>
            <person name="Nachman R.J."/>
        </authorList>
    </citation>
    <scope>PROTEIN SEQUENCE</scope>
    <scope>SUBCELLULAR LOCATION</scope>
    <scope>TISSUE SPECIFICITY</scope>
    <scope>AMIDATION AT ARG-10</scope>
    <source>
        <tissue evidence="1">Antennal lobe</tissue>
    </source>
</reference>
<evidence type="ECO:0000269" key="1">
    <source>
    </source>
</evidence>
<evidence type="ECO:0000303" key="2">
    <source>
    </source>
</evidence>
<evidence type="ECO:0000305" key="3"/>
<organism>
    <name type="scientific">Oncopeltus fasciatus</name>
    <name type="common">Large milkweed bug</name>
    <dbReference type="NCBI Taxonomy" id="7536"/>
    <lineage>
        <taxon>Eukaryota</taxon>
        <taxon>Metazoa</taxon>
        <taxon>Ecdysozoa</taxon>
        <taxon>Arthropoda</taxon>
        <taxon>Hexapoda</taxon>
        <taxon>Insecta</taxon>
        <taxon>Pterygota</taxon>
        <taxon>Neoptera</taxon>
        <taxon>Paraneoptera</taxon>
        <taxon>Hemiptera</taxon>
        <taxon>Heteroptera</taxon>
        <taxon>Panheteroptera</taxon>
        <taxon>Pentatomomorpha</taxon>
        <taxon>Lygaeoidea</taxon>
        <taxon>Lygaeidae</taxon>
        <taxon>Lygaeinae</taxon>
        <taxon>Oncopeltus</taxon>
    </lineage>
</organism>
<proteinExistence type="evidence at protein level"/>
<dbReference type="GO" id="GO:0005576">
    <property type="term" value="C:extracellular region"/>
    <property type="evidence" value="ECO:0007005"/>
    <property type="project" value="UniProtKB"/>
</dbReference>
<dbReference type="GO" id="GO:0007218">
    <property type="term" value="P:neuropeptide signaling pathway"/>
    <property type="evidence" value="ECO:0007669"/>
    <property type="project" value="UniProtKB-KW"/>
</dbReference>
<accession>P86586</accession>
<sequence>APVMGFQGMR</sequence>
<name>TRP5_ONCFA</name>
<comment type="subcellular location">
    <subcellularLocation>
        <location evidence="1 3">Secreted</location>
    </subcellularLocation>
</comment>
<comment type="tissue specificity">
    <text evidence="1">Expressed in the antennal lobe (at protein level).</text>
</comment>
<feature type="peptide" id="PRO_0000395654" description="Tachykinin-related peptide 5" evidence="1">
    <location>
        <begin position="1"/>
        <end position="10"/>
    </location>
</feature>
<feature type="modified residue" description="Arginine amide" evidence="1">
    <location>
        <position position="10"/>
    </location>
</feature>
<protein>
    <recommendedName>
        <fullName evidence="2">Tachykinin-related peptide 5</fullName>
        <shortName evidence="2">TKRP-5</shortName>
    </recommendedName>
</protein>